<evidence type="ECO:0000250" key="1"/>
<evidence type="ECO:0000305" key="2"/>
<sequence length="791" mass="90369">MEETEIPQNIVLTRLDDLINWGRANSLWPMFFGLSCCFVEMMTSFTSRYDISRFGAEVLRGTPREADLMVIAGTVFKKMAPSILRLYEQMAEPKWVISMGSCANSGGMYDVYSVVQGVNQIIPVDVHVPGCPPRPEAFLQGVMLLQEKIRREERPARKVLHMAGGTEGTTRPVLVDGVTKSRDTRGPGMEGIAIRGTPVQHPRFWMSRSDEMWRPPAPRHDYPDFGLAGELETIFGGRVAVEQAATDMLTYRCPPELVPEVLRHLKSRSSAPFRRLEDVVCVDESCRRERERFPDFTVNYHLLNFDIPGHLRIKTELMGETPELPSATGVFPAADWYEREAFDMYGIRFAGHPNLRRILMPPDWEGHPLRKEHPFRATEMPPYTTDDARRHQALPASDFFDRIDEETLIINLGPQHPGTHGIIRFILKLDGEEIVDMDTDIGYHHRGAEKIGERQHWNQFIPYTDRIDYLAGVQNNLAYVNSVERLCGITVPDRAITIRVMLAELFRIASHLVWLGTFAADVGAMTPVFYTFTDREKIFDIIEMVTGGRMHPSWFRIGGVTEDLPEGWDGAVKEFLDWMPGRLKEYEDLLKENPIFKARLKGVGVITKDEAMEWGITGPNLRACGMAWDLRKKIPYNGYQHFHFEIPTEEGGDCWARYRIRVEEIRQSLHIVAQCRKEMPAGRWITDDYRYVLPKKRDTLHDIESLIHHFINATRGMAPPRGENYSAIEAPKGENGYFVVSDGLNVPYRVRIKTPSFPHIQALPLMSRGWLVADFLAIIGSIDFVLADLDR</sequence>
<name>NUBCD_GEOMG</name>
<organism>
    <name type="scientific">Geobacter metallireducens (strain ATCC 53774 / DSM 7210 / GS-15)</name>
    <dbReference type="NCBI Taxonomy" id="269799"/>
    <lineage>
        <taxon>Bacteria</taxon>
        <taxon>Pseudomonadati</taxon>
        <taxon>Thermodesulfobacteriota</taxon>
        <taxon>Desulfuromonadia</taxon>
        <taxon>Geobacterales</taxon>
        <taxon>Geobacteraceae</taxon>
        <taxon>Geobacter</taxon>
    </lineage>
</organism>
<dbReference type="EC" id="7.1.1.-"/>
<dbReference type="EMBL" id="CP000148">
    <property type="protein sequence ID" value="ABB30400.1"/>
    <property type="molecule type" value="Genomic_DNA"/>
</dbReference>
<dbReference type="RefSeq" id="WP_004512740.1">
    <property type="nucleotide sequence ID" value="NC_007517.1"/>
</dbReference>
<dbReference type="SMR" id="Q39ZC4"/>
<dbReference type="STRING" id="269799.Gmet_0153"/>
<dbReference type="KEGG" id="gme:Gmet_0153"/>
<dbReference type="eggNOG" id="COG0377">
    <property type="taxonomic scope" value="Bacteria"/>
</dbReference>
<dbReference type="eggNOG" id="COG0649">
    <property type="taxonomic scope" value="Bacteria"/>
</dbReference>
<dbReference type="eggNOG" id="COG0852">
    <property type="taxonomic scope" value="Bacteria"/>
</dbReference>
<dbReference type="HOGENOM" id="CLU_015134_5_0_7"/>
<dbReference type="Proteomes" id="UP000007073">
    <property type="component" value="Chromosome"/>
</dbReference>
<dbReference type="GO" id="GO:0005886">
    <property type="term" value="C:plasma membrane"/>
    <property type="evidence" value="ECO:0007669"/>
    <property type="project" value="UniProtKB-SubCell"/>
</dbReference>
<dbReference type="GO" id="GO:0051539">
    <property type="term" value="F:4 iron, 4 sulfur cluster binding"/>
    <property type="evidence" value="ECO:0007669"/>
    <property type="project" value="InterPro"/>
</dbReference>
<dbReference type="GO" id="GO:0005506">
    <property type="term" value="F:iron ion binding"/>
    <property type="evidence" value="ECO:0007669"/>
    <property type="project" value="UniProtKB-UniRule"/>
</dbReference>
<dbReference type="GO" id="GO:0051287">
    <property type="term" value="F:NAD binding"/>
    <property type="evidence" value="ECO:0007669"/>
    <property type="project" value="InterPro"/>
</dbReference>
<dbReference type="GO" id="GO:0008137">
    <property type="term" value="F:NADH dehydrogenase (ubiquinone) activity"/>
    <property type="evidence" value="ECO:0007669"/>
    <property type="project" value="InterPro"/>
</dbReference>
<dbReference type="GO" id="GO:0050136">
    <property type="term" value="F:NADH:ubiquinone reductase (non-electrogenic) activity"/>
    <property type="evidence" value="ECO:0007669"/>
    <property type="project" value="UniProtKB-UniRule"/>
</dbReference>
<dbReference type="GO" id="GO:0048038">
    <property type="term" value="F:quinone binding"/>
    <property type="evidence" value="ECO:0007669"/>
    <property type="project" value="UniProtKB-KW"/>
</dbReference>
<dbReference type="FunFam" id="3.40.50.12280:FF:000002">
    <property type="entry name" value="NADH-quinone oxidoreductase subunit B"/>
    <property type="match status" value="1"/>
</dbReference>
<dbReference type="FunFam" id="1.10.645.10:FF:000001">
    <property type="entry name" value="NADH-quinone oxidoreductase subunit C/D"/>
    <property type="match status" value="1"/>
</dbReference>
<dbReference type="Gene3D" id="3.40.50.12280">
    <property type="match status" value="1"/>
</dbReference>
<dbReference type="Gene3D" id="1.10.645.10">
    <property type="entry name" value="Cytochrome-c3 Hydrogenase, chain B"/>
    <property type="match status" value="1"/>
</dbReference>
<dbReference type="Gene3D" id="3.30.460.80">
    <property type="entry name" value="NADH:ubiquinone oxidoreductase, 30kDa subunit"/>
    <property type="match status" value="1"/>
</dbReference>
<dbReference type="HAMAP" id="MF_01356">
    <property type="entry name" value="NDH1_NuoB"/>
    <property type="match status" value="1"/>
</dbReference>
<dbReference type="HAMAP" id="MF_01357">
    <property type="entry name" value="NDH1_NuoC"/>
    <property type="match status" value="1"/>
</dbReference>
<dbReference type="HAMAP" id="MF_01358">
    <property type="entry name" value="NDH1_NuoD"/>
    <property type="match status" value="1"/>
</dbReference>
<dbReference type="InterPro" id="IPR010218">
    <property type="entry name" value="NADH_DH_suC"/>
</dbReference>
<dbReference type="InterPro" id="IPR001135">
    <property type="entry name" value="NADH_Q_OxRdtase_suD"/>
</dbReference>
<dbReference type="InterPro" id="IPR037232">
    <property type="entry name" value="NADH_quin_OxRdtase_su_C/D-like"/>
</dbReference>
<dbReference type="InterPro" id="IPR006137">
    <property type="entry name" value="NADH_UbQ_OxRdtase-like_20kDa"/>
</dbReference>
<dbReference type="InterPro" id="IPR001268">
    <property type="entry name" value="NADH_UbQ_OxRdtase_30kDa_su"/>
</dbReference>
<dbReference type="InterPro" id="IPR014029">
    <property type="entry name" value="NADH_UbQ_OxRdtase_49kDa_CS"/>
</dbReference>
<dbReference type="InterPro" id="IPR020396">
    <property type="entry name" value="NADH_UbQ_OxRdtase_CS"/>
</dbReference>
<dbReference type="InterPro" id="IPR006138">
    <property type="entry name" value="NADH_UQ_OxRdtase_20Kd_su"/>
</dbReference>
<dbReference type="InterPro" id="IPR022885">
    <property type="entry name" value="NDH1_su_D/H"/>
</dbReference>
<dbReference type="InterPro" id="IPR029014">
    <property type="entry name" value="NiFe-Hase_large"/>
</dbReference>
<dbReference type="NCBIfam" id="TIGR01957">
    <property type="entry name" value="nuoB_fam"/>
    <property type="match status" value="1"/>
</dbReference>
<dbReference type="NCBIfam" id="TIGR01962">
    <property type="entry name" value="NuoD"/>
    <property type="match status" value="1"/>
</dbReference>
<dbReference type="NCBIfam" id="NF004739">
    <property type="entry name" value="PRK06075.1"/>
    <property type="match status" value="1"/>
</dbReference>
<dbReference type="NCBIfam" id="NF005012">
    <property type="entry name" value="PRK06411.1"/>
    <property type="match status" value="1"/>
</dbReference>
<dbReference type="NCBIfam" id="NF009808">
    <property type="entry name" value="PRK13292.1"/>
    <property type="match status" value="1"/>
</dbReference>
<dbReference type="PANTHER" id="PTHR11993:SF45">
    <property type="entry name" value="NADH-QUINONE OXIDOREDUCTASE SUBUNIT C_D"/>
    <property type="match status" value="1"/>
</dbReference>
<dbReference type="PANTHER" id="PTHR11993">
    <property type="entry name" value="NADH-UBIQUINONE OXIDOREDUCTASE 49 KDA SUBUNIT"/>
    <property type="match status" value="1"/>
</dbReference>
<dbReference type="Pfam" id="PF00329">
    <property type="entry name" value="Complex1_30kDa"/>
    <property type="match status" value="1"/>
</dbReference>
<dbReference type="Pfam" id="PF00346">
    <property type="entry name" value="Complex1_49kDa"/>
    <property type="match status" value="1"/>
</dbReference>
<dbReference type="Pfam" id="PF01058">
    <property type="entry name" value="Oxidored_q6"/>
    <property type="match status" value="1"/>
</dbReference>
<dbReference type="SUPFAM" id="SSF56770">
    <property type="entry name" value="HydA/Nqo6-like"/>
    <property type="match status" value="1"/>
</dbReference>
<dbReference type="SUPFAM" id="SSF56762">
    <property type="entry name" value="HydB/Nqo4-like"/>
    <property type="match status" value="1"/>
</dbReference>
<dbReference type="SUPFAM" id="SSF143243">
    <property type="entry name" value="Nqo5-like"/>
    <property type="match status" value="1"/>
</dbReference>
<dbReference type="PROSITE" id="PS00542">
    <property type="entry name" value="COMPLEX1_30K"/>
    <property type="match status" value="1"/>
</dbReference>
<dbReference type="PROSITE" id="PS00535">
    <property type="entry name" value="COMPLEX1_49K"/>
    <property type="match status" value="1"/>
</dbReference>
<feature type="chain" id="PRO_0000358643" description="NADH-quinone oxidoreductase subunit B/C/D">
    <location>
        <begin position="1"/>
        <end position="791"/>
    </location>
</feature>
<feature type="region of interest" description="NADH dehydrogenase I subunit B" evidence="1">
    <location>
        <begin position="1"/>
        <end position="155"/>
    </location>
</feature>
<feature type="region of interest" description="NADH dehydrogenase I subunit C" evidence="1">
    <location>
        <begin position="229"/>
        <end position="384"/>
    </location>
</feature>
<feature type="region of interest" description="NADH dehydrogenase I subunit D" evidence="1">
    <location>
        <begin position="411"/>
        <end position="791"/>
    </location>
</feature>
<protein>
    <recommendedName>
        <fullName>NADH-quinone oxidoreductase subunit B/C/D</fullName>
        <ecNumber>7.1.1.-</ecNumber>
    </recommendedName>
    <alternativeName>
        <fullName>NADH dehydrogenase I subunit B/C/D</fullName>
    </alternativeName>
    <alternativeName>
        <fullName>NDH-1 subunit B/C/D</fullName>
    </alternativeName>
</protein>
<proteinExistence type="inferred from homology"/>
<keyword id="KW-0997">Cell inner membrane</keyword>
<keyword id="KW-1003">Cell membrane</keyword>
<keyword id="KW-0472">Membrane</keyword>
<keyword id="KW-0511">Multifunctional enzyme</keyword>
<keyword id="KW-0520">NAD</keyword>
<keyword id="KW-0874">Quinone</keyword>
<keyword id="KW-1185">Reference proteome</keyword>
<keyword id="KW-1278">Translocase</keyword>
<keyword id="KW-0813">Transport</keyword>
<keyword id="KW-0830">Ubiquinone</keyword>
<comment type="function">
    <text evidence="1">NDH-1 shuttles electrons from NADH, via FMN and iron-sulfur (Fe-S) centers, to quinones in the respiratory chain. The immediate electron acceptor for the enzyme in this species is believed to be ubiquinone. Couples the redox reaction to proton translocation (for every two electrons transferred, four hydrogen ions are translocated across the cytoplasmic membrane), and thus conserves the redox energy in a proton gradient.</text>
</comment>
<comment type="catalytic activity">
    <reaction>
        <text>a quinone + NADH + 5 H(+)(in) = a quinol + NAD(+) + 4 H(+)(out)</text>
        <dbReference type="Rhea" id="RHEA:57888"/>
        <dbReference type="ChEBI" id="CHEBI:15378"/>
        <dbReference type="ChEBI" id="CHEBI:24646"/>
        <dbReference type="ChEBI" id="CHEBI:57540"/>
        <dbReference type="ChEBI" id="CHEBI:57945"/>
        <dbReference type="ChEBI" id="CHEBI:132124"/>
    </reaction>
</comment>
<comment type="subunit">
    <text evidence="1">NDH-1 is composed of about 13 different subunits. Subunits NuoBCD, E, F, and G constitute the peripheral sector of the complex (By similarity).</text>
</comment>
<comment type="subcellular location">
    <subcellularLocation>
        <location evidence="1">Cell inner membrane</location>
        <topology evidence="1">Peripheral membrane protein</topology>
        <orientation evidence="1">Cytoplasmic side</orientation>
    </subcellularLocation>
</comment>
<comment type="similarity">
    <text evidence="2">In the N-terminal section; belongs to the complex I 20 kDa subunit family.</text>
</comment>
<comment type="similarity">
    <text evidence="2">In the central section; belongs to the complex I 30 kDa subunit family.</text>
</comment>
<comment type="similarity">
    <text evidence="2">In the C-terminal section; belongs to the complex I 49 kDa subunit family.</text>
</comment>
<gene>
    <name type="primary">nuoBCD</name>
    <name type="synonym">nuoB</name>
    <name type="synonym">nuoC</name>
    <name type="synonym">nuoD</name>
    <name type="ordered locus">Gmet_0153</name>
</gene>
<accession>Q39ZC4</accession>
<reference key="1">
    <citation type="journal article" date="2009" name="BMC Microbiol.">
        <title>The genome sequence of Geobacter metallireducens: features of metabolism, physiology and regulation common and dissimilar to Geobacter sulfurreducens.</title>
        <authorList>
            <person name="Aklujkar M."/>
            <person name="Krushkal J."/>
            <person name="DiBartolo G."/>
            <person name="Lapidus A."/>
            <person name="Land M.L."/>
            <person name="Lovley D.R."/>
        </authorList>
    </citation>
    <scope>NUCLEOTIDE SEQUENCE [LARGE SCALE GENOMIC DNA]</scope>
    <source>
        <strain>ATCC 53774 / DSM 7210 / GS-15</strain>
    </source>
</reference>